<dbReference type="EMBL" id="BC157814">
    <property type="protein sequence ID" value="AAI57815.1"/>
    <property type="molecule type" value="mRNA"/>
</dbReference>
<dbReference type="RefSeq" id="NP_001128162.1">
    <property type="nucleotide sequence ID" value="NM_001134690.1"/>
</dbReference>
<dbReference type="RefSeq" id="NP_001128163.1">
    <property type="nucleotide sequence ID" value="NM_001134691.1"/>
</dbReference>
<dbReference type="BMRB" id="B0BLS0"/>
<dbReference type="SMR" id="B0BLS0"/>
<dbReference type="FunCoup" id="B0BLS0">
    <property type="interactions" value="195"/>
</dbReference>
<dbReference type="STRING" id="10116.ENSRNOP00000011373"/>
<dbReference type="PaxDb" id="10116-ENSRNOP00000011373"/>
<dbReference type="GeneID" id="100188932"/>
<dbReference type="KEGG" id="rno:100188932"/>
<dbReference type="AGR" id="RGD:2300150"/>
<dbReference type="CTD" id="100128731"/>
<dbReference type="RGD" id="2300150">
    <property type="gene designation" value="Ost4"/>
</dbReference>
<dbReference type="eggNOG" id="ENOG502SDSY">
    <property type="taxonomic scope" value="Eukaryota"/>
</dbReference>
<dbReference type="InParanoid" id="B0BLS0"/>
<dbReference type="OrthoDB" id="2124077at2759"/>
<dbReference type="PhylomeDB" id="B0BLS0"/>
<dbReference type="UniPathway" id="UPA00378"/>
<dbReference type="PRO" id="PR:B0BLS0"/>
<dbReference type="Proteomes" id="UP000002494">
    <property type="component" value="Chromosome 6"/>
</dbReference>
<dbReference type="Bgee" id="ENSRNOG00000008605">
    <property type="expression patterns" value="Expressed in ovary and 20 other cell types or tissues"/>
</dbReference>
<dbReference type="GO" id="GO:0008250">
    <property type="term" value="C:oligosaccharyltransferase complex"/>
    <property type="evidence" value="ECO:0000266"/>
    <property type="project" value="RGD"/>
</dbReference>
<dbReference type="GO" id="GO:0160226">
    <property type="term" value="C:oligosaccharyltransferase complex A"/>
    <property type="evidence" value="ECO:0000266"/>
    <property type="project" value="RGD"/>
</dbReference>
<dbReference type="GO" id="GO:0160227">
    <property type="term" value="C:oligosaccharyltransferase complex B"/>
    <property type="evidence" value="ECO:0000266"/>
    <property type="project" value="RGD"/>
</dbReference>
<dbReference type="GO" id="GO:0018279">
    <property type="term" value="P:protein N-linked glycosylation via asparagine"/>
    <property type="evidence" value="ECO:0000266"/>
    <property type="project" value="RGD"/>
</dbReference>
<dbReference type="InterPro" id="IPR018943">
    <property type="entry name" value="Oligosaccaryltransferase"/>
</dbReference>
<dbReference type="InterPro" id="IPR051307">
    <property type="entry name" value="OST4"/>
</dbReference>
<dbReference type="InterPro" id="IPR036330">
    <property type="entry name" value="Ost4p_sf"/>
</dbReference>
<dbReference type="PANTHER" id="PTHR48164">
    <property type="entry name" value="DOLICHYL-DIPHOSPHOOLIGOSACCHARIDE--PROTEIN GLYCOSYLTRANSFERASE SUBUNIT 4"/>
    <property type="match status" value="1"/>
</dbReference>
<dbReference type="PANTHER" id="PTHR48164:SF1">
    <property type="entry name" value="DOLICHYL-DIPHOSPHOOLIGOSACCHARIDE--PROTEIN GLYCOSYLTRANSFERASE SUBUNIT 4"/>
    <property type="match status" value="1"/>
</dbReference>
<dbReference type="Pfam" id="PF10215">
    <property type="entry name" value="Ost4"/>
    <property type="match status" value="1"/>
</dbReference>
<dbReference type="SUPFAM" id="SSF103464">
    <property type="entry name" value="Oligosaccharyltransferase subunit ost4p"/>
    <property type="match status" value="1"/>
</dbReference>
<sequence length="37" mass="4193">MITDVQLAIFANMLGVSLFLLVVLYHYVAVNNPKKQE</sequence>
<keyword id="KW-0256">Endoplasmic reticulum</keyword>
<keyword id="KW-0472">Membrane</keyword>
<keyword id="KW-1185">Reference proteome</keyword>
<keyword id="KW-0735">Signal-anchor</keyword>
<keyword id="KW-0812">Transmembrane</keyword>
<keyword id="KW-1133">Transmembrane helix</keyword>
<evidence type="ECO:0000250" key="1">
    <source>
        <dbReference type="UniProtKB" id="P0C6T2"/>
    </source>
</evidence>
<evidence type="ECO:0000250" key="2">
    <source>
        <dbReference type="UniProtKB" id="P0CU66"/>
    </source>
</evidence>
<evidence type="ECO:0000255" key="3"/>
<evidence type="ECO:0000305" key="4"/>
<evidence type="ECO:0000312" key="5">
    <source>
        <dbReference type="RGD" id="2300150"/>
    </source>
</evidence>
<organism>
    <name type="scientific">Rattus norvegicus</name>
    <name type="common">Rat</name>
    <dbReference type="NCBI Taxonomy" id="10116"/>
    <lineage>
        <taxon>Eukaryota</taxon>
        <taxon>Metazoa</taxon>
        <taxon>Chordata</taxon>
        <taxon>Craniata</taxon>
        <taxon>Vertebrata</taxon>
        <taxon>Euteleostomi</taxon>
        <taxon>Mammalia</taxon>
        <taxon>Eutheria</taxon>
        <taxon>Euarchontoglires</taxon>
        <taxon>Glires</taxon>
        <taxon>Rodentia</taxon>
        <taxon>Myomorpha</taxon>
        <taxon>Muroidea</taxon>
        <taxon>Muridae</taxon>
        <taxon>Murinae</taxon>
        <taxon>Rattus</taxon>
    </lineage>
</organism>
<name>OST4_RAT</name>
<accession>B0BLS0</accession>
<feature type="chain" id="PRO_0000328640" description="Dolichyl-diphosphooligosaccharide--protein glycosyltransferase subunit 4">
    <location>
        <begin position="1"/>
        <end position="37"/>
    </location>
</feature>
<feature type="topological domain" description="Lumenal" evidence="3">
    <location>
        <begin position="1"/>
        <end position="4"/>
    </location>
</feature>
<feature type="transmembrane region" description="Helical" evidence="3">
    <location>
        <begin position="5"/>
        <end position="25"/>
    </location>
</feature>
<feature type="topological domain" description="Cytoplasmic" evidence="3">
    <location>
        <begin position="26"/>
        <end position="37"/>
    </location>
</feature>
<protein>
    <recommendedName>
        <fullName evidence="4">Dolichyl-diphosphooligosaccharide--protein glycosyltransferase subunit 4</fullName>
    </recommendedName>
</protein>
<reference key="1">
    <citation type="journal article" date="2004" name="Genome Res.">
        <title>The status, quality, and expansion of the NIH full-length cDNA project: the Mammalian Gene Collection (MGC).</title>
        <authorList>
            <consortium name="The MGC Project Team"/>
        </authorList>
    </citation>
    <scope>NUCLEOTIDE SEQUENCE [LARGE SCALE MRNA]</scope>
    <source>
        <tissue>Brain</tissue>
    </source>
</reference>
<comment type="function">
    <text evidence="1">Subunit of the oligosaccharyl transferase (OST) complex that catalyzes the initial transfer of a defined glycan (Glc(3)Man(9)GlcNAc(2) in eukaryotes) from the lipid carrier dolichol-pyrophosphate to an asparagine residue within an Asn-X-Ser/Thr consensus motif in nascent polypeptide chains, the first step in protein N-glycosylation. N-glycosylation occurs cotranslationally and the complex associates with the Sec61 complex at the channel-forming translocon complex that mediates protein translocation across the endoplasmic reticulum (ER). All subunits are required for a maximal enzyme activity. Specifically involved in maintaining stability of STT3A-containing OST complexes.</text>
</comment>
<comment type="pathway">
    <text evidence="1">Protein modification; protein glycosylation.</text>
</comment>
<comment type="subunit">
    <text evidence="1 2">Component of the oligosaccharyltransferase (OST) complex (By similarity). OST exists in two different complex forms which contain common core subunits RPN1, RPN2, OST48, OST4, DAD1 and TMEM258, either STT3A or STT3B as catalytic subunits, and form-specific accessory subunits (By similarity). STT3A complex assembly occurs through the formation of 3 subcomplexes. Subcomplex 1 contains RPN1 and TMEM258, subcomplex 2 contains the STT3A-specific subunits STT3A, DC2/OSTC, and KCP2 as well as the core subunit OST4, and subcomplex 3 contains RPN2, DAD1, and OST48. The STT3A complex can form stable complexes with the Sec61 complex or with both the Sec61 and TRAP complexes (By similarity).</text>
</comment>
<comment type="subcellular location">
    <subcellularLocation>
        <location evidence="1">Endoplasmic reticulum</location>
    </subcellularLocation>
    <subcellularLocation>
        <location>Endoplasmic reticulum membrane</location>
        <topology evidence="4">Single-pass type III membrane protein</topology>
    </subcellularLocation>
</comment>
<comment type="similarity">
    <text evidence="4">Belongs to the OST4 family.</text>
</comment>
<proteinExistence type="inferred from homology"/>
<gene>
    <name evidence="5" type="primary">Ost4</name>
</gene>